<sequence length="467" mass="51232">MAQKLVAQGGETGDVWDDGVYDNVTKVYVGQGQYGIAFVKFEYANGSEVVVGDEHGEKTELGVEEFEIDSDDYIVYVEGYREKVSDMTSEMITFLSFKTSKGKTSQPIVKKPGVKFVLHGGKIVGFHGRSTDVLHSLGAYVSLPSTPKLLGNWIKVEQNGEGPGLRCSHGIAQVGNKIYSFGGELIPNQPIDKHLYVFDLETRTWSIAPATGDVPHLSCLGVRMVSVGSTLYTFGGRDFSRQYNGFYSFDTTTNEWKLLTPVEEGPTPRSFHSMAADEENVYVFGGVGAMDRIKTLDSYNIVDKTWFHCSNPGDSFSIRGGAGLEVVQGKVWIVYGFNGCEVDDVHFYDPAEDKWTQVETFGVKPNERSVFASAAIGKHIVIFGGEIAMDPRAHVGPGQLIDGTFALDTETLQWERLDKFEGTPSSRGWTASTTGTIDGKKGLVMHGGKAPTNDRFDDLFFYGIDSV</sequence>
<evidence type="ECO:0000250" key="1">
    <source>
        <dbReference type="UniProtKB" id="G1FNI6"/>
    </source>
</evidence>
<evidence type="ECO:0000250" key="2">
    <source>
        <dbReference type="UniProtKB" id="Q8RY71"/>
    </source>
</evidence>
<evidence type="ECO:0000250" key="3">
    <source>
        <dbReference type="UniProtKB" id="Q9SDM9"/>
    </source>
</evidence>
<evidence type="ECO:0000255" key="4"/>
<evidence type="ECO:0000255" key="5">
    <source>
        <dbReference type="PROSITE-ProRule" id="PRU01088"/>
    </source>
</evidence>
<evidence type="ECO:0000269" key="6">
    <source>
    </source>
</evidence>
<evidence type="ECO:0000269" key="7">
    <source>
    </source>
</evidence>
<evidence type="ECO:0000269" key="8">
    <source>
    </source>
</evidence>
<evidence type="ECO:0000269" key="9">
    <source>
    </source>
</evidence>
<evidence type="ECO:0000303" key="10">
    <source>
    </source>
</evidence>
<evidence type="ECO:0000303" key="11">
    <source>
    </source>
</evidence>
<evidence type="ECO:0000305" key="12"/>
<evidence type="ECO:0000312" key="13">
    <source>
        <dbReference type="Araport" id="AT3G16390"/>
    </source>
</evidence>
<evidence type="ECO:0000312" key="14">
    <source>
        <dbReference type="EMBL" id="AAB63639.1"/>
    </source>
</evidence>
<evidence type="ECO:0000312" key="15">
    <source>
        <dbReference type="EMBL" id="BAB01137.1"/>
    </source>
</evidence>
<proteinExistence type="evidence at protein level"/>
<accession>O04318</accession>
<accession>Q8GX12</accession>
<comment type="function">
    <text evidence="6 8">Specifier protein responsible for constitutive and herbivore-induced simple nitrile formation, especially in roots (PubMed:27990154). Promotes simple nitriles, but not epithionitrile or thiocyanate formation (PubMed:18987211). Converts allylglucosinolate and benzylglucosinolate (glucotropaeolin) to their corresponding simple nitriles in the presence of myrosinase (PubMed:18987211).</text>
</comment>
<comment type="catalytic activity">
    <reaction evidence="6 7">
        <text>a (Z)-N-(sulfonatooxy)alkanimidothioate = a nitrile + sulfur + sulfate</text>
        <dbReference type="Rhea" id="RHEA:59956"/>
        <dbReference type="ChEBI" id="CHEBI:16189"/>
        <dbReference type="ChEBI" id="CHEBI:18379"/>
        <dbReference type="ChEBI" id="CHEBI:26833"/>
        <dbReference type="ChEBI" id="CHEBI:183089"/>
        <dbReference type="EC" id="4.8.1.5"/>
    </reaction>
</comment>
<comment type="catalytic activity">
    <reaction evidence="7">
        <text>(Z)-phenyl-N-(sulfonatooxy)methanimidothioate = phenylacetonitrile + sulfur + sulfate</text>
        <dbReference type="Rhea" id="RHEA:69308"/>
        <dbReference type="ChEBI" id="CHEBI:16189"/>
        <dbReference type="ChEBI" id="CHEBI:25979"/>
        <dbReference type="ChEBI" id="CHEBI:26833"/>
        <dbReference type="ChEBI" id="CHEBI:183061"/>
    </reaction>
</comment>
<comment type="catalytic activity">
    <reaction evidence="7">
        <text>(Z)-N-(sulfonatooxy)prop-2-enimidothioate = but-3-enenitrile + sulfur + sulfate</text>
        <dbReference type="Rhea" id="RHEA:69276"/>
        <dbReference type="ChEBI" id="CHEBI:16189"/>
        <dbReference type="ChEBI" id="CHEBI:26833"/>
        <dbReference type="ChEBI" id="CHEBI:183062"/>
        <dbReference type="ChEBI" id="CHEBI:183063"/>
    </reaction>
</comment>
<comment type="cofactor">
    <cofactor evidence="2">
        <name>Fe(2+)</name>
        <dbReference type="ChEBI" id="CHEBI:29033"/>
    </cofactor>
</comment>
<comment type="tissue specificity">
    <text evidence="8 9">Mainly expressed in roots, and, at low levels, in seedlings and leaves (PubMed:27990154). Observed in seeds (PubMed:31850033).</text>
</comment>
<comment type="developmental stage">
    <text evidence="9">In seeds, present constitutively throughout embryogenesis and during stratification at low levels (PubMed:31850033). Accumulates progressively after seed germination and in young seedlings (PubMed:31850033).</text>
</comment>
<comment type="disruption phenotype">
    <text evidence="6 8">No visible phenotype (PubMed:18987211). Reduced simple nitrile levels in favor of isothiocyanates in tissues corresponding to its main basal expression (PubMed:27990154).</text>
</comment>
<comment type="miscellaneous">
    <text evidence="1">The proton donor differs depending on substrates.</text>
</comment>
<comment type="similarity">
    <text evidence="5 12">Belongs to the jacalin lectin family.</text>
</comment>
<comment type="sequence caution" evidence="12">
    <conflict type="erroneous initiation">
        <sequence resource="EMBL-CDS" id="BAC43106"/>
    </conflict>
    <text>Truncated N-terminus.</text>
</comment>
<dbReference type="EC" id="4.8.1.5" evidence="6"/>
<dbReference type="EMBL" id="AC001645">
    <property type="protein sequence ID" value="AAB63639.1"/>
    <property type="molecule type" value="Genomic_DNA"/>
</dbReference>
<dbReference type="EMBL" id="AP000373">
    <property type="protein sequence ID" value="BAB01137.1"/>
    <property type="molecule type" value="Genomic_DNA"/>
</dbReference>
<dbReference type="EMBL" id="CP002686">
    <property type="protein sequence ID" value="AEE75806.1"/>
    <property type="molecule type" value="Genomic_DNA"/>
</dbReference>
<dbReference type="EMBL" id="CP002686">
    <property type="protein sequence ID" value="ANM65032.1"/>
    <property type="molecule type" value="Genomic_DNA"/>
</dbReference>
<dbReference type="EMBL" id="AK118502">
    <property type="protein sequence ID" value="BAC43106.1"/>
    <property type="status" value="ALT_INIT"/>
    <property type="molecule type" value="mRNA"/>
</dbReference>
<dbReference type="EMBL" id="BT004661">
    <property type="protein sequence ID" value="AAO42907.1"/>
    <property type="molecule type" value="mRNA"/>
</dbReference>
<dbReference type="RefSeq" id="NP_001327031.1">
    <property type="nucleotide sequence ID" value="NM_001338231.1"/>
</dbReference>
<dbReference type="RefSeq" id="NP_566545.1">
    <property type="nucleotide sequence ID" value="NM_112510.3"/>
</dbReference>
<dbReference type="SMR" id="O04318"/>
<dbReference type="FunCoup" id="O04318">
    <property type="interactions" value="315"/>
</dbReference>
<dbReference type="STRING" id="3702.O04318"/>
<dbReference type="GlyGen" id="O04318">
    <property type="glycosylation" value="1 site"/>
</dbReference>
<dbReference type="iPTMnet" id="O04318"/>
<dbReference type="MetOSite" id="O04318"/>
<dbReference type="PaxDb" id="3702-AT3G16390.1"/>
<dbReference type="ProteomicsDB" id="232290"/>
<dbReference type="EnsemblPlants" id="AT3G16390.1">
    <property type="protein sequence ID" value="AT3G16390.1"/>
    <property type="gene ID" value="AT3G16390"/>
</dbReference>
<dbReference type="EnsemblPlants" id="AT3G16390.2">
    <property type="protein sequence ID" value="AT3G16390.2"/>
    <property type="gene ID" value="AT3G16390"/>
</dbReference>
<dbReference type="GeneID" id="820886"/>
<dbReference type="Gramene" id="AT3G16390.1">
    <property type="protein sequence ID" value="AT3G16390.1"/>
    <property type="gene ID" value="AT3G16390"/>
</dbReference>
<dbReference type="Gramene" id="AT3G16390.2">
    <property type="protein sequence ID" value="AT3G16390.2"/>
    <property type="gene ID" value="AT3G16390"/>
</dbReference>
<dbReference type="KEGG" id="ath:AT3G16390"/>
<dbReference type="Araport" id="AT3G16390"/>
<dbReference type="TAIR" id="AT3G16390">
    <property type="gene designation" value="NSP3"/>
</dbReference>
<dbReference type="eggNOG" id="KOG0379">
    <property type="taxonomic scope" value="Eukaryota"/>
</dbReference>
<dbReference type="HOGENOM" id="CLU_030461_2_0_1"/>
<dbReference type="InParanoid" id="O04318"/>
<dbReference type="OMA" id="WIKVEQN"/>
<dbReference type="OrthoDB" id="10250130at2759"/>
<dbReference type="PhylomeDB" id="O04318"/>
<dbReference type="PRO" id="PR:O04318"/>
<dbReference type="Proteomes" id="UP000006548">
    <property type="component" value="Chromosome 3"/>
</dbReference>
<dbReference type="ExpressionAtlas" id="O04318">
    <property type="expression patterns" value="baseline and differential"/>
</dbReference>
<dbReference type="GO" id="GO:0009507">
    <property type="term" value="C:chloroplast"/>
    <property type="evidence" value="ECO:0007005"/>
    <property type="project" value="TAIR"/>
</dbReference>
<dbReference type="GO" id="GO:0005829">
    <property type="term" value="C:cytosol"/>
    <property type="evidence" value="ECO:0007005"/>
    <property type="project" value="TAIR"/>
</dbReference>
<dbReference type="GO" id="GO:0030246">
    <property type="term" value="F:carbohydrate binding"/>
    <property type="evidence" value="ECO:0007669"/>
    <property type="project" value="UniProtKB-KW"/>
</dbReference>
<dbReference type="GO" id="GO:0016829">
    <property type="term" value="F:lyase activity"/>
    <property type="evidence" value="ECO:0007669"/>
    <property type="project" value="UniProtKB-KW"/>
</dbReference>
<dbReference type="GO" id="GO:0046872">
    <property type="term" value="F:metal ion binding"/>
    <property type="evidence" value="ECO:0007669"/>
    <property type="project" value="UniProtKB-KW"/>
</dbReference>
<dbReference type="GO" id="GO:0019762">
    <property type="term" value="P:glucosinolate catabolic process"/>
    <property type="evidence" value="ECO:0000314"/>
    <property type="project" value="TAIR"/>
</dbReference>
<dbReference type="GO" id="GO:0080028">
    <property type="term" value="P:nitrile biosynthetic process"/>
    <property type="evidence" value="ECO:0000314"/>
    <property type="project" value="TAIR"/>
</dbReference>
<dbReference type="GO" id="GO:0009845">
    <property type="term" value="P:seed germination"/>
    <property type="evidence" value="ECO:0000270"/>
    <property type="project" value="UniProtKB"/>
</dbReference>
<dbReference type="CDD" id="cd09612">
    <property type="entry name" value="Jacalin"/>
    <property type="match status" value="1"/>
</dbReference>
<dbReference type="FunFam" id="2.100.10.30:FF:000001">
    <property type="entry name" value="Jacalin-related lectin 33"/>
    <property type="match status" value="1"/>
</dbReference>
<dbReference type="FunFam" id="2.120.10.80:FF:000175">
    <property type="entry name" value="Nitrile-specifier protein 2"/>
    <property type="match status" value="1"/>
</dbReference>
<dbReference type="Gene3D" id="2.100.10.30">
    <property type="entry name" value="Jacalin-like lectin domain"/>
    <property type="match status" value="1"/>
</dbReference>
<dbReference type="Gene3D" id="2.120.10.80">
    <property type="entry name" value="Kelch-type beta propeller"/>
    <property type="match status" value="1"/>
</dbReference>
<dbReference type="InterPro" id="IPR001229">
    <property type="entry name" value="Jacalin-like_lectin_dom"/>
</dbReference>
<dbReference type="InterPro" id="IPR033734">
    <property type="entry name" value="Jacalin-like_lectin_dom_plant"/>
</dbReference>
<dbReference type="InterPro" id="IPR036404">
    <property type="entry name" value="Jacalin-like_lectin_dom_sf"/>
</dbReference>
<dbReference type="InterPro" id="IPR015915">
    <property type="entry name" value="Kelch-typ_b-propeller"/>
</dbReference>
<dbReference type="InterPro" id="IPR035429">
    <property type="entry name" value="NSP1/2/3"/>
</dbReference>
<dbReference type="PANTHER" id="PTHR47435">
    <property type="entry name" value="KELCH REPEAT PROTEIN (AFU_ORTHOLOGUE AFUA_5G12780)"/>
    <property type="match status" value="1"/>
</dbReference>
<dbReference type="PANTHER" id="PTHR47435:SF5">
    <property type="entry name" value="NITRILE-SPECIFIER PROTEIN 1-RELATED"/>
    <property type="match status" value="1"/>
</dbReference>
<dbReference type="Pfam" id="PF01419">
    <property type="entry name" value="Jacalin"/>
    <property type="match status" value="1"/>
</dbReference>
<dbReference type="Pfam" id="PF24681">
    <property type="entry name" value="Kelch_KLHDC2_KLHL20_DRC7"/>
    <property type="match status" value="1"/>
</dbReference>
<dbReference type="PIRSF" id="PIRSF038118">
    <property type="entry name" value="Myrosinase-db_jacalin"/>
    <property type="match status" value="1"/>
</dbReference>
<dbReference type="SMART" id="SM00915">
    <property type="entry name" value="Jacalin"/>
    <property type="match status" value="1"/>
</dbReference>
<dbReference type="SUPFAM" id="SSF117281">
    <property type="entry name" value="Kelch motif"/>
    <property type="match status" value="1"/>
</dbReference>
<dbReference type="SUPFAM" id="SSF51101">
    <property type="entry name" value="Mannose-binding lectins"/>
    <property type="match status" value="1"/>
</dbReference>
<dbReference type="PROSITE" id="PS51752">
    <property type="entry name" value="JACALIN_LECTIN"/>
    <property type="match status" value="1"/>
</dbReference>
<reference key="1">
    <citation type="journal article" date="2000" name="Nature">
        <title>Sequence and analysis of chromosome 3 of the plant Arabidopsis thaliana.</title>
        <authorList>
            <person name="Salanoubat M."/>
            <person name="Lemcke K."/>
            <person name="Rieger M."/>
            <person name="Ansorge W."/>
            <person name="Unseld M."/>
            <person name="Fartmann B."/>
            <person name="Valle G."/>
            <person name="Bloecker H."/>
            <person name="Perez-Alonso M."/>
            <person name="Obermaier B."/>
            <person name="Delseny M."/>
            <person name="Boutry M."/>
            <person name="Grivell L.A."/>
            <person name="Mache R."/>
            <person name="Puigdomenech P."/>
            <person name="De Simone V."/>
            <person name="Choisne N."/>
            <person name="Artiguenave F."/>
            <person name="Robert C."/>
            <person name="Brottier P."/>
            <person name="Wincker P."/>
            <person name="Cattolico L."/>
            <person name="Weissenbach J."/>
            <person name="Saurin W."/>
            <person name="Quetier F."/>
            <person name="Schaefer M."/>
            <person name="Mueller-Auer S."/>
            <person name="Gabel C."/>
            <person name="Fuchs M."/>
            <person name="Benes V."/>
            <person name="Wurmbach E."/>
            <person name="Drzonek H."/>
            <person name="Erfle H."/>
            <person name="Jordan N."/>
            <person name="Bangert S."/>
            <person name="Wiedelmann R."/>
            <person name="Kranz H."/>
            <person name="Voss H."/>
            <person name="Holland R."/>
            <person name="Brandt P."/>
            <person name="Nyakatura G."/>
            <person name="Vezzi A."/>
            <person name="D'Angelo M."/>
            <person name="Pallavicini A."/>
            <person name="Toppo S."/>
            <person name="Simionati B."/>
            <person name="Conrad A."/>
            <person name="Hornischer K."/>
            <person name="Kauer G."/>
            <person name="Loehnert T.-H."/>
            <person name="Nordsiek G."/>
            <person name="Reichelt J."/>
            <person name="Scharfe M."/>
            <person name="Schoen O."/>
            <person name="Bargues M."/>
            <person name="Terol J."/>
            <person name="Climent J."/>
            <person name="Navarro P."/>
            <person name="Collado C."/>
            <person name="Perez-Perez A."/>
            <person name="Ottenwaelder B."/>
            <person name="Duchemin D."/>
            <person name="Cooke R."/>
            <person name="Laudie M."/>
            <person name="Berger-Llauro C."/>
            <person name="Purnelle B."/>
            <person name="Masuy D."/>
            <person name="de Haan M."/>
            <person name="Maarse A.C."/>
            <person name="Alcaraz J.-P."/>
            <person name="Cottet A."/>
            <person name="Casacuberta E."/>
            <person name="Monfort A."/>
            <person name="Argiriou A."/>
            <person name="Flores M."/>
            <person name="Liguori R."/>
            <person name="Vitale D."/>
            <person name="Mannhaupt G."/>
            <person name="Haase D."/>
            <person name="Schoof H."/>
            <person name="Rudd S."/>
            <person name="Zaccaria P."/>
            <person name="Mewes H.-W."/>
            <person name="Mayer K.F.X."/>
            <person name="Kaul S."/>
            <person name="Town C.D."/>
            <person name="Koo H.L."/>
            <person name="Tallon L.J."/>
            <person name="Jenkins J."/>
            <person name="Rooney T."/>
            <person name="Rizzo M."/>
            <person name="Walts A."/>
            <person name="Utterback T."/>
            <person name="Fujii C.Y."/>
            <person name="Shea T.P."/>
            <person name="Creasy T.H."/>
            <person name="Haas B."/>
            <person name="Maiti R."/>
            <person name="Wu D."/>
            <person name="Peterson J."/>
            <person name="Van Aken S."/>
            <person name="Pai G."/>
            <person name="Militscher J."/>
            <person name="Sellers P."/>
            <person name="Gill J.E."/>
            <person name="Feldblyum T.V."/>
            <person name="Preuss D."/>
            <person name="Lin X."/>
            <person name="Nierman W.C."/>
            <person name="Salzberg S.L."/>
            <person name="White O."/>
            <person name="Venter J.C."/>
            <person name="Fraser C.M."/>
            <person name="Kaneko T."/>
            <person name="Nakamura Y."/>
            <person name="Sato S."/>
            <person name="Kato T."/>
            <person name="Asamizu E."/>
            <person name="Sasamoto S."/>
            <person name="Kimura T."/>
            <person name="Idesawa K."/>
            <person name="Kawashima K."/>
            <person name="Kishida Y."/>
            <person name="Kiyokawa C."/>
            <person name="Kohara M."/>
            <person name="Matsumoto M."/>
            <person name="Matsuno A."/>
            <person name="Muraki A."/>
            <person name="Nakayama S."/>
            <person name="Nakazaki N."/>
            <person name="Shinpo S."/>
            <person name="Takeuchi C."/>
            <person name="Wada T."/>
            <person name="Watanabe A."/>
            <person name="Yamada M."/>
            <person name="Yasuda M."/>
            <person name="Tabata S."/>
        </authorList>
    </citation>
    <scope>NUCLEOTIDE SEQUENCE [LARGE SCALE GENOMIC DNA]</scope>
    <source>
        <strain>cv. Columbia</strain>
    </source>
</reference>
<reference key="2">
    <citation type="journal article" date="2000" name="DNA Res.">
        <title>Structural analysis of Arabidopsis thaliana chromosome 3. II. Sequence features of the 4,251,695 bp regions covered by 90 P1, TAC and BAC clones.</title>
        <authorList>
            <person name="Kaneko T."/>
            <person name="Katoh T."/>
            <person name="Sato S."/>
            <person name="Nakamura Y."/>
            <person name="Asamizu E."/>
            <person name="Tabata S."/>
        </authorList>
    </citation>
    <scope>NUCLEOTIDE SEQUENCE [LARGE SCALE GENOMIC DNA]</scope>
    <source>
        <strain>cv. Columbia</strain>
    </source>
</reference>
<reference key="3">
    <citation type="journal article" date="2017" name="Plant J.">
        <title>Araport11: a complete reannotation of the Arabidopsis thaliana reference genome.</title>
        <authorList>
            <person name="Cheng C.Y."/>
            <person name="Krishnakumar V."/>
            <person name="Chan A.P."/>
            <person name="Thibaud-Nissen F."/>
            <person name="Schobel S."/>
            <person name="Town C.D."/>
        </authorList>
    </citation>
    <scope>GENOME REANNOTATION</scope>
    <source>
        <strain>cv. Columbia</strain>
    </source>
</reference>
<reference key="4">
    <citation type="journal article" date="2002" name="Science">
        <title>Functional annotation of a full-length Arabidopsis cDNA collection.</title>
        <authorList>
            <person name="Seki M."/>
            <person name="Narusaka M."/>
            <person name="Kamiya A."/>
            <person name="Ishida J."/>
            <person name="Satou M."/>
            <person name="Sakurai T."/>
            <person name="Nakajima M."/>
            <person name="Enju A."/>
            <person name="Akiyama K."/>
            <person name="Oono Y."/>
            <person name="Muramatsu M."/>
            <person name="Hayashizaki Y."/>
            <person name="Kawai J."/>
            <person name="Carninci P."/>
            <person name="Itoh M."/>
            <person name="Ishii Y."/>
            <person name="Arakawa T."/>
            <person name="Shibata K."/>
            <person name="Shinagawa A."/>
            <person name="Shinozaki K."/>
        </authorList>
    </citation>
    <scope>NUCLEOTIDE SEQUENCE [LARGE SCALE MRNA] OF 369-467</scope>
    <source>
        <strain>cv. Columbia</strain>
    </source>
</reference>
<reference key="5">
    <citation type="journal article" date="2003" name="Science">
        <title>Empirical analysis of transcriptional activity in the Arabidopsis genome.</title>
        <authorList>
            <person name="Yamada K."/>
            <person name="Lim J."/>
            <person name="Dale J.M."/>
            <person name="Chen H."/>
            <person name="Shinn P."/>
            <person name="Palm C.J."/>
            <person name="Southwick A.M."/>
            <person name="Wu H.C."/>
            <person name="Kim C.J."/>
            <person name="Nguyen M."/>
            <person name="Pham P.K."/>
            <person name="Cheuk R.F."/>
            <person name="Karlin-Newmann G."/>
            <person name="Liu S.X."/>
            <person name="Lam B."/>
            <person name="Sakano H."/>
            <person name="Wu T."/>
            <person name="Yu G."/>
            <person name="Miranda M."/>
            <person name="Quach H.L."/>
            <person name="Tripp M."/>
            <person name="Chang C.H."/>
            <person name="Lee J.M."/>
            <person name="Toriumi M.J."/>
            <person name="Chan M.M."/>
            <person name="Tang C.C."/>
            <person name="Onodera C.S."/>
            <person name="Deng J.M."/>
            <person name="Akiyama K."/>
            <person name="Ansari Y."/>
            <person name="Arakawa T."/>
            <person name="Banh J."/>
            <person name="Banno F."/>
            <person name="Bowser L."/>
            <person name="Brooks S.Y."/>
            <person name="Carninci P."/>
            <person name="Chao Q."/>
            <person name="Choy N."/>
            <person name="Enju A."/>
            <person name="Goldsmith A.D."/>
            <person name="Gurjal M."/>
            <person name="Hansen N.F."/>
            <person name="Hayashizaki Y."/>
            <person name="Johnson-Hopson C."/>
            <person name="Hsuan V.W."/>
            <person name="Iida K."/>
            <person name="Karnes M."/>
            <person name="Khan S."/>
            <person name="Koesema E."/>
            <person name="Ishida J."/>
            <person name="Jiang P.X."/>
            <person name="Jones T."/>
            <person name="Kawai J."/>
            <person name="Kamiya A."/>
            <person name="Meyers C."/>
            <person name="Nakajima M."/>
            <person name="Narusaka M."/>
            <person name="Seki M."/>
            <person name="Sakurai T."/>
            <person name="Satou M."/>
            <person name="Tamse R."/>
            <person name="Vaysberg M."/>
            <person name="Wallender E.K."/>
            <person name="Wong C."/>
            <person name="Yamamura Y."/>
            <person name="Yuan S."/>
            <person name="Shinozaki K."/>
            <person name="Davis R.W."/>
            <person name="Theologis A."/>
            <person name="Ecker J.R."/>
        </authorList>
    </citation>
    <scope>NUCLEOTIDE SEQUENCE [LARGE SCALE MRNA] OF 389-467</scope>
    <source>
        <strain>cv. Columbia</strain>
    </source>
</reference>
<reference key="6">
    <citation type="journal article" date="2008" name="Plant Cell Physiol.">
        <title>Antagonistic jacalin-related lectins regulate the size of ER body-type beta-glucosidase complexes in Arabidopsis thaliana.</title>
        <authorList>
            <person name="Nagano A.J."/>
            <person name="Fukao Y."/>
            <person name="Fujiwara M."/>
            <person name="Nishimura M."/>
            <person name="Hara-Nishimura I."/>
        </authorList>
    </citation>
    <scope>GENE FAMILY</scope>
    <scope>NOMENCLATURE</scope>
</reference>
<reference key="7">
    <citation type="journal article" date="2009" name="J. Biol. Chem.">
        <title>Nitrile-specifier proteins involved in glucosinolate hydrolysis in Arabidopsis thaliana.</title>
        <authorList>
            <person name="Kissen R."/>
            <person name="Bones A.M."/>
        </authorList>
    </citation>
    <scope>GENE FAMILY</scope>
    <source>
        <strain>cv. Ru-0</strain>
    </source>
</reference>
<reference key="8">
    <citation type="journal article" date="2009" name="Plant Physiol.">
        <title>The genetic basis of constitutive and herbivore-induced ESP-independent nitrile formation in Arabidopsis.</title>
        <authorList>
            <person name="Burow M."/>
            <person name="Losansky A."/>
            <person name="Muller R."/>
            <person name="Plock A."/>
            <person name="Kliebenstein D.J."/>
            <person name="Wittstock U."/>
        </authorList>
    </citation>
    <scope>FUNCTION</scope>
    <scope>DISRUPTION PHENOTYPE</scope>
    <scope>CATALYTIC ACTIVITY</scope>
</reference>
<reference key="9">
    <citation type="journal article" date="2016" name="Front. Plant Sci.">
        <title>NSP-dependent simple nitrile formation dominates upon breakdown of major aliphatic glucosinolates in roots, seeds, and seedlings of Arabidopsis thaliana Columbia-0.</title>
        <authorList>
            <person name="Wittstock U."/>
            <person name="Meier K."/>
            <person name="Doerr F."/>
            <person name="Ravindran B.M."/>
        </authorList>
    </citation>
    <scope>FUNCTION</scope>
    <scope>DISRUPTION PHENOTYPE</scope>
    <scope>TISSUE SPECIFICITY</scope>
    <source>
        <strain>cv. Columbia</strain>
    </source>
</reference>
<reference key="10">
    <citation type="journal article" date="2019" name="Front. Plant Sci.">
        <title>Glucosinolate content in dormant and germinating Arabidopsis thaliana seeds is affected by non-functional alleles of classical myrosinase and nitrile-specifier protein genes.</title>
        <authorList>
            <person name="Meier K."/>
            <person name="Ehbrecht M.D."/>
            <person name="Wittstock U."/>
        </authorList>
    </citation>
    <scope>TISSUE SPECIFICITY</scope>
    <scope>DEVELOPMENTAL STAGE</scope>
    <source>
        <strain>cv. Columbia</strain>
    </source>
</reference>
<protein>
    <recommendedName>
        <fullName evidence="12">Thiohydroximate-O-sulfate sulfur/sulfate-lyase (nitrile-forming) NSP3</fullName>
        <ecNumber evidence="6">4.8.1.5</ecNumber>
    </recommendedName>
    <alternativeName>
        <fullName evidence="10">Jacalin-related lectin 27</fullName>
    </alternativeName>
    <alternativeName>
        <fullName evidence="11">Nitrile-specifier protein 3</fullName>
        <shortName evidence="11">AtNSP3</shortName>
    </alternativeName>
</protein>
<keyword id="KW-0408">Iron</keyword>
<keyword id="KW-0880">Kelch repeat</keyword>
<keyword id="KW-0430">Lectin</keyword>
<keyword id="KW-0456">Lyase</keyword>
<keyword id="KW-0479">Metal-binding</keyword>
<keyword id="KW-1185">Reference proteome</keyword>
<keyword id="KW-0677">Repeat</keyword>
<organism>
    <name type="scientific">Arabidopsis thaliana</name>
    <name type="common">Mouse-ear cress</name>
    <dbReference type="NCBI Taxonomy" id="3702"/>
    <lineage>
        <taxon>Eukaryota</taxon>
        <taxon>Viridiplantae</taxon>
        <taxon>Streptophyta</taxon>
        <taxon>Embryophyta</taxon>
        <taxon>Tracheophyta</taxon>
        <taxon>Spermatophyta</taxon>
        <taxon>Magnoliopsida</taxon>
        <taxon>eudicotyledons</taxon>
        <taxon>Gunneridae</taxon>
        <taxon>Pentapetalae</taxon>
        <taxon>rosids</taxon>
        <taxon>malvids</taxon>
        <taxon>Brassicales</taxon>
        <taxon>Brassicaceae</taxon>
        <taxon>Camelineae</taxon>
        <taxon>Arabidopsis</taxon>
    </lineage>
</organism>
<name>JAL27_ARATH</name>
<gene>
    <name evidence="11" type="primary">NSP3</name>
    <name evidence="10" type="synonym">JAL27</name>
    <name evidence="13" type="ordered locus">At3g16390</name>
    <name evidence="15" type="ORF">MDC8.1</name>
    <name evidence="14" type="ORF">T02O04.12</name>
</gene>
<feature type="chain" id="PRO_0000363144" description="Thiohydroximate-O-sulfate sulfur/sulfate-lyase (nitrile-forming) NSP3">
    <location>
        <begin position="1"/>
        <end position="467"/>
    </location>
</feature>
<feature type="domain" description="Jacalin-type lectin" evidence="5">
    <location>
        <begin position="2"/>
        <end position="143"/>
    </location>
</feature>
<feature type="repeat" description="Kelch 1" evidence="4">
    <location>
        <begin position="177"/>
        <end position="225"/>
    </location>
</feature>
<feature type="repeat" description="Kelch 2" evidence="4">
    <location>
        <begin position="230"/>
        <end position="276"/>
    </location>
</feature>
<feature type="repeat" description="Kelch 3" evidence="4">
    <location>
        <begin position="280"/>
        <end position="329"/>
    </location>
</feature>
<feature type="repeat" description="Kelch 4" evidence="4">
    <location>
        <begin position="331"/>
        <end position="375"/>
    </location>
</feature>
<feature type="repeat" description="Kelch 5" evidence="4">
    <location>
        <begin position="379"/>
        <end position="434"/>
    </location>
</feature>
<feature type="active site" description="Proton donor" evidence="3">
    <location>
        <position position="237"/>
    </location>
</feature>
<feature type="active site" description="Proton donor" evidence="3">
    <location>
        <position position="292"/>
    </location>
</feature>
<feature type="binding site" evidence="3">
    <location>
        <position position="237"/>
    </location>
    <ligand>
        <name>a (Z)-N-(sulfonatooxy)alkanimidothioate</name>
        <dbReference type="ChEBI" id="CHEBI:183089"/>
    </ligand>
    <ligandPart>
        <name>sulfur</name>
        <dbReference type="ChEBI" id="CHEBI:26833"/>
    </ligandPart>
</feature>
<feature type="binding site" evidence="3">
    <location>
        <position position="270"/>
    </location>
    <ligand>
        <name>a (Z)-N-(sulfonatooxy)alkanimidothioate</name>
        <dbReference type="ChEBI" id="CHEBI:183089"/>
    </ligand>
</feature>
<feature type="binding site" evidence="3">
    <location>
        <position position="292"/>
    </location>
    <ligand>
        <name>a (Z)-N-(sulfonatooxy)alkanimidothioate</name>
        <dbReference type="ChEBI" id="CHEBI:183089"/>
    </ligand>
    <ligandPart>
        <name>sulfur</name>
        <dbReference type="ChEBI" id="CHEBI:26833"/>
    </ligandPart>
</feature>
<feature type="binding site" evidence="3">
    <location>
        <position position="321"/>
    </location>
    <ligand>
        <name>a (Z)-N-(sulfonatooxy)alkanimidothioate</name>
        <dbReference type="ChEBI" id="CHEBI:183089"/>
    </ligand>
</feature>
<feature type="binding site" evidence="3">
    <location>
        <position position="370"/>
    </location>
    <ligand>
        <name>a (Z)-N-(sulfonatooxy)alkanimidothioate</name>
        <dbReference type="ChEBI" id="CHEBI:183089"/>
    </ligand>
</feature>
<feature type="binding site" evidence="3">
    <location>
        <position position="386"/>
    </location>
    <ligand>
        <name>Fe(2+)</name>
        <dbReference type="ChEBI" id="CHEBI:29033"/>
    </ligand>
</feature>
<feature type="binding site" evidence="3">
    <location>
        <position position="390"/>
    </location>
    <ligand>
        <name>Fe(2+)</name>
        <dbReference type="ChEBI" id="CHEBI:29033"/>
    </ligand>
</feature>
<feature type="binding site" evidence="3">
    <location>
        <position position="394"/>
    </location>
    <ligand>
        <name>Fe(2+)</name>
        <dbReference type="ChEBI" id="CHEBI:29033"/>
    </ligand>
</feature>
<feature type="binding site" evidence="3">
    <location>
        <position position="429"/>
    </location>
    <ligand>
        <name>a (Z)-N-(sulfonatooxy)alkanimidothioate</name>
        <dbReference type="ChEBI" id="CHEBI:183089"/>
    </ligand>
</feature>